<gene>
    <name type="primary">CDKC-2</name>
    <name type="ordered locus">At5g64960</name>
    <name type="ORF">MXK3.19</name>
</gene>
<comment type="catalytic activity">
    <reaction>
        <text>L-seryl-[protein] + ATP = O-phospho-L-seryl-[protein] + ADP + H(+)</text>
        <dbReference type="Rhea" id="RHEA:17989"/>
        <dbReference type="Rhea" id="RHEA-COMP:9863"/>
        <dbReference type="Rhea" id="RHEA-COMP:11604"/>
        <dbReference type="ChEBI" id="CHEBI:15378"/>
        <dbReference type="ChEBI" id="CHEBI:29999"/>
        <dbReference type="ChEBI" id="CHEBI:30616"/>
        <dbReference type="ChEBI" id="CHEBI:83421"/>
        <dbReference type="ChEBI" id="CHEBI:456216"/>
        <dbReference type="EC" id="2.7.11.22"/>
    </reaction>
</comment>
<comment type="catalytic activity">
    <reaction>
        <text>L-threonyl-[protein] + ATP = O-phospho-L-threonyl-[protein] + ADP + H(+)</text>
        <dbReference type="Rhea" id="RHEA:46608"/>
        <dbReference type="Rhea" id="RHEA-COMP:11060"/>
        <dbReference type="Rhea" id="RHEA-COMP:11605"/>
        <dbReference type="ChEBI" id="CHEBI:15378"/>
        <dbReference type="ChEBI" id="CHEBI:30013"/>
        <dbReference type="ChEBI" id="CHEBI:30616"/>
        <dbReference type="ChEBI" id="CHEBI:61977"/>
        <dbReference type="ChEBI" id="CHEBI:456216"/>
        <dbReference type="EC" id="2.7.11.22"/>
    </reaction>
</comment>
<comment type="catalytic activity">
    <reaction>
        <text>[DNA-directed RNA polymerase] + ATP = phospho-[DNA-directed RNA polymerase] + ADP + H(+)</text>
        <dbReference type="Rhea" id="RHEA:10216"/>
        <dbReference type="Rhea" id="RHEA-COMP:11321"/>
        <dbReference type="Rhea" id="RHEA-COMP:11322"/>
        <dbReference type="ChEBI" id="CHEBI:15378"/>
        <dbReference type="ChEBI" id="CHEBI:30616"/>
        <dbReference type="ChEBI" id="CHEBI:43176"/>
        <dbReference type="ChEBI" id="CHEBI:68546"/>
        <dbReference type="ChEBI" id="CHEBI:456216"/>
        <dbReference type="EC" id="2.7.11.23"/>
    </reaction>
</comment>
<comment type="subunit">
    <text evidence="6">Interacts with CYCT1-3.</text>
</comment>
<comment type="interaction">
    <interactant intactId="EBI-2025894">
        <id>Q8W4P1</id>
    </interactant>
    <interactant intactId="EBI-2025764">
        <id>Q8LBC0</id>
        <label>CYCT1-3</label>
    </interactant>
    <organismsDiffer>false</organismsDiffer>
    <experiments>2</experiments>
</comment>
<comment type="interaction">
    <interactant intactId="EBI-2025894">
        <id>Q8W4P1</id>
    </interactant>
    <interactant intactId="EBI-4426557">
        <id>Q84MB2</id>
        <label>TIFY8</label>
    </interactant>
    <organismsDiffer>false</organismsDiffer>
    <experiments>3</experiments>
</comment>
<comment type="alternative products">
    <event type="alternative splicing"/>
    <isoform>
        <id>Q8W4P1-1</id>
        <name>1</name>
        <sequence type="displayed"/>
    </isoform>
    <text>A number of isoforms are produced. According to EST sequences.</text>
</comment>
<comment type="tissue specificity">
    <text evidence="6">Highly expressed in flowers. Expressed in seedlings, roots, rosettes and stems.</text>
</comment>
<comment type="similarity">
    <text evidence="7">Belongs to the protein kinase superfamily. CMGC Ser/Thr protein kinase family. CDC2/CDKX subfamily.</text>
</comment>
<protein>
    <recommendedName>
        <fullName>Cyclin-dependent kinase C-2</fullName>
        <shortName>CDKC;2</shortName>
        <ecNumber>2.7.11.22</ecNumber>
        <ecNumber>2.7.11.23</ecNumber>
    </recommendedName>
</protein>
<dbReference type="EC" id="2.7.11.22"/>
<dbReference type="EC" id="2.7.11.23"/>
<dbReference type="EMBL" id="AB019236">
    <property type="protein sequence ID" value="BAA97308.1"/>
    <property type="molecule type" value="Genomic_DNA"/>
</dbReference>
<dbReference type="EMBL" id="CP002688">
    <property type="protein sequence ID" value="AED97975.1"/>
    <property type="molecule type" value="Genomic_DNA"/>
</dbReference>
<dbReference type="EMBL" id="AF360134">
    <property type="protein sequence ID" value="AAK25844.1"/>
    <property type="molecule type" value="mRNA"/>
</dbReference>
<dbReference type="EMBL" id="AY039990">
    <property type="protein sequence ID" value="AAK64067.1"/>
    <property type="molecule type" value="mRNA"/>
</dbReference>
<dbReference type="EMBL" id="AY062449">
    <property type="protein sequence ID" value="AAL32527.1"/>
    <property type="molecule type" value="mRNA"/>
</dbReference>
<dbReference type="EMBL" id="BT002565">
    <property type="protein sequence ID" value="AAO00925.1"/>
    <property type="molecule type" value="mRNA"/>
</dbReference>
<dbReference type="RefSeq" id="NP_201301.1">
    <molecule id="Q8W4P1-1"/>
    <property type="nucleotide sequence ID" value="NM_125895.5"/>
</dbReference>
<dbReference type="SMR" id="Q8W4P1"/>
<dbReference type="BioGRID" id="21862">
    <property type="interactions" value="21"/>
</dbReference>
<dbReference type="FunCoup" id="Q8W4P1">
    <property type="interactions" value="4737"/>
</dbReference>
<dbReference type="IntAct" id="Q8W4P1">
    <property type="interactions" value="13"/>
</dbReference>
<dbReference type="STRING" id="3702.Q8W4P1"/>
<dbReference type="iPTMnet" id="Q8W4P1"/>
<dbReference type="PaxDb" id="3702-AT5G64960.1"/>
<dbReference type="ProteomicsDB" id="223975">
    <molecule id="Q8W4P1-1"/>
</dbReference>
<dbReference type="EnsemblPlants" id="AT5G64960.1">
    <molecule id="Q8W4P1-1"/>
    <property type="protein sequence ID" value="AT5G64960.1"/>
    <property type="gene ID" value="AT5G64960"/>
</dbReference>
<dbReference type="GeneID" id="836620"/>
<dbReference type="Gramene" id="AT5G64960.1">
    <molecule id="Q8W4P1-1"/>
    <property type="protein sequence ID" value="AT5G64960.1"/>
    <property type="gene ID" value="AT5G64960"/>
</dbReference>
<dbReference type="KEGG" id="ath:AT5G64960"/>
<dbReference type="Araport" id="AT5G64960"/>
<dbReference type="TAIR" id="AT5G64960">
    <property type="gene designation" value="CDKC2"/>
</dbReference>
<dbReference type="eggNOG" id="KOG0600">
    <property type="taxonomic scope" value="Eukaryota"/>
</dbReference>
<dbReference type="HOGENOM" id="CLU_000288_181_1_1"/>
<dbReference type="InParanoid" id="Q8W4P1"/>
<dbReference type="OMA" id="DALDHDY"/>
<dbReference type="OrthoDB" id="28397at2759"/>
<dbReference type="PhylomeDB" id="Q8W4P1"/>
<dbReference type="BRENDA" id="2.7.11.22">
    <property type="organism ID" value="399"/>
</dbReference>
<dbReference type="PRO" id="PR:Q8W4P1"/>
<dbReference type="Proteomes" id="UP000006548">
    <property type="component" value="Chromosome 5"/>
</dbReference>
<dbReference type="ExpressionAtlas" id="Q8W4P1">
    <property type="expression patterns" value="baseline and differential"/>
</dbReference>
<dbReference type="GO" id="GO:0016604">
    <property type="term" value="C:nuclear body"/>
    <property type="evidence" value="ECO:0000314"/>
    <property type="project" value="TAIR"/>
</dbReference>
<dbReference type="GO" id="GO:0005634">
    <property type="term" value="C:nucleus"/>
    <property type="evidence" value="ECO:0007005"/>
    <property type="project" value="TAIR"/>
</dbReference>
<dbReference type="GO" id="GO:0005524">
    <property type="term" value="F:ATP binding"/>
    <property type="evidence" value="ECO:0007669"/>
    <property type="project" value="UniProtKB-KW"/>
</dbReference>
<dbReference type="GO" id="GO:0004693">
    <property type="term" value="F:cyclin-dependent protein serine/threonine kinase activity"/>
    <property type="evidence" value="ECO:0007669"/>
    <property type="project" value="UniProtKB-EC"/>
</dbReference>
<dbReference type="GO" id="GO:0016301">
    <property type="term" value="F:kinase activity"/>
    <property type="evidence" value="ECO:0000314"/>
    <property type="project" value="TAIR"/>
</dbReference>
<dbReference type="GO" id="GO:0106310">
    <property type="term" value="F:protein serine kinase activity"/>
    <property type="evidence" value="ECO:0007669"/>
    <property type="project" value="RHEA"/>
</dbReference>
<dbReference type="GO" id="GO:0008353">
    <property type="term" value="F:RNA polymerase II CTD heptapeptide repeat kinase activity"/>
    <property type="evidence" value="ECO:0007669"/>
    <property type="project" value="UniProtKB-EC"/>
</dbReference>
<dbReference type="GO" id="GO:0048440">
    <property type="term" value="P:carpel development"/>
    <property type="evidence" value="ECO:0000316"/>
    <property type="project" value="TAIR"/>
</dbReference>
<dbReference type="GO" id="GO:0009908">
    <property type="term" value="P:flower development"/>
    <property type="evidence" value="ECO:0000315"/>
    <property type="project" value="TAIR"/>
</dbReference>
<dbReference type="GO" id="GO:0006397">
    <property type="term" value="P:mRNA processing"/>
    <property type="evidence" value="ECO:0000315"/>
    <property type="project" value="TAIR"/>
</dbReference>
<dbReference type="GO" id="GO:0050792">
    <property type="term" value="P:regulation of viral process"/>
    <property type="evidence" value="ECO:0000315"/>
    <property type="project" value="TAIR"/>
</dbReference>
<dbReference type="GO" id="GO:0009615">
    <property type="term" value="P:response to virus"/>
    <property type="evidence" value="ECO:0000270"/>
    <property type="project" value="TAIR"/>
</dbReference>
<dbReference type="GO" id="GO:0009414">
    <property type="term" value="P:response to water deprivation"/>
    <property type="evidence" value="ECO:0000315"/>
    <property type="project" value="TAIR"/>
</dbReference>
<dbReference type="CDD" id="cd07840">
    <property type="entry name" value="STKc_CDK9_like"/>
    <property type="match status" value="1"/>
</dbReference>
<dbReference type="FunFam" id="1.10.510.10:FF:000273">
    <property type="entry name" value="Cyclin-dependent kinase C-2"/>
    <property type="match status" value="1"/>
</dbReference>
<dbReference type="FunFam" id="3.30.200.20:FF:000272">
    <property type="entry name" value="Cyclin-dependent kinase C-2"/>
    <property type="match status" value="1"/>
</dbReference>
<dbReference type="Gene3D" id="3.30.200.20">
    <property type="entry name" value="Phosphorylase Kinase, domain 1"/>
    <property type="match status" value="1"/>
</dbReference>
<dbReference type="Gene3D" id="1.10.510.10">
    <property type="entry name" value="Transferase(Phosphotransferase) domain 1"/>
    <property type="match status" value="1"/>
</dbReference>
<dbReference type="InterPro" id="IPR050108">
    <property type="entry name" value="CDK"/>
</dbReference>
<dbReference type="InterPro" id="IPR011009">
    <property type="entry name" value="Kinase-like_dom_sf"/>
</dbReference>
<dbReference type="InterPro" id="IPR000719">
    <property type="entry name" value="Prot_kinase_dom"/>
</dbReference>
<dbReference type="InterPro" id="IPR017441">
    <property type="entry name" value="Protein_kinase_ATP_BS"/>
</dbReference>
<dbReference type="InterPro" id="IPR008271">
    <property type="entry name" value="Ser/Thr_kinase_AS"/>
</dbReference>
<dbReference type="PANTHER" id="PTHR24056">
    <property type="entry name" value="CELL DIVISION PROTEIN KINASE"/>
    <property type="match status" value="1"/>
</dbReference>
<dbReference type="PANTHER" id="PTHR24056:SF507">
    <property type="entry name" value="CYCLIN-DEPENDENT KINASE C-2"/>
    <property type="match status" value="1"/>
</dbReference>
<dbReference type="Pfam" id="PF00069">
    <property type="entry name" value="Pkinase"/>
    <property type="match status" value="1"/>
</dbReference>
<dbReference type="SMART" id="SM00220">
    <property type="entry name" value="S_TKc"/>
    <property type="match status" value="1"/>
</dbReference>
<dbReference type="SUPFAM" id="SSF56112">
    <property type="entry name" value="Protein kinase-like (PK-like)"/>
    <property type="match status" value="1"/>
</dbReference>
<dbReference type="PROSITE" id="PS00107">
    <property type="entry name" value="PROTEIN_KINASE_ATP"/>
    <property type="match status" value="1"/>
</dbReference>
<dbReference type="PROSITE" id="PS50011">
    <property type="entry name" value="PROTEIN_KINASE_DOM"/>
    <property type="match status" value="1"/>
</dbReference>
<dbReference type="PROSITE" id="PS00108">
    <property type="entry name" value="PROTEIN_KINASE_ST"/>
    <property type="match status" value="1"/>
</dbReference>
<keyword id="KW-0025">Alternative splicing</keyword>
<keyword id="KW-0067">ATP-binding</keyword>
<keyword id="KW-0418">Kinase</keyword>
<keyword id="KW-0547">Nucleotide-binding</keyword>
<keyword id="KW-0597">Phosphoprotein</keyword>
<keyword id="KW-1185">Reference proteome</keyword>
<keyword id="KW-0723">Serine/threonine-protein kinase</keyword>
<keyword id="KW-0808">Transferase</keyword>
<feature type="chain" id="PRO_0000293118" description="Cyclin-dependent kinase C-2">
    <location>
        <begin position="1"/>
        <end position="513"/>
    </location>
</feature>
<feature type="domain" description="Protein kinase" evidence="3">
    <location>
        <begin position="26"/>
        <end position="325"/>
    </location>
</feature>
<feature type="region of interest" description="Disordered" evidence="5">
    <location>
        <begin position="337"/>
        <end position="513"/>
    </location>
</feature>
<feature type="compositionally biased region" description="Low complexity" evidence="5">
    <location>
        <begin position="395"/>
        <end position="404"/>
    </location>
</feature>
<feature type="compositionally biased region" description="Polar residues" evidence="5">
    <location>
        <begin position="434"/>
        <end position="448"/>
    </location>
</feature>
<feature type="compositionally biased region" description="Gly residues" evidence="5">
    <location>
        <begin position="461"/>
        <end position="476"/>
    </location>
</feature>
<feature type="compositionally biased region" description="Gly residues" evidence="5">
    <location>
        <begin position="483"/>
        <end position="496"/>
    </location>
</feature>
<feature type="active site" description="Proton acceptor" evidence="3 4">
    <location>
        <position position="164"/>
    </location>
</feature>
<feature type="binding site" evidence="3">
    <location>
        <begin position="32"/>
        <end position="40"/>
    </location>
    <ligand>
        <name>ATP</name>
        <dbReference type="ChEBI" id="CHEBI:30616"/>
    </ligand>
</feature>
<feature type="binding site" evidence="3">
    <location>
        <position position="55"/>
    </location>
    <ligand>
        <name>ATP</name>
        <dbReference type="ChEBI" id="CHEBI:30616"/>
    </ligand>
</feature>
<feature type="modified residue" description="Phosphotyrosine" evidence="1">
    <location>
        <position position="37"/>
    </location>
</feature>
<feature type="modified residue" description="Phosphothreonine" evidence="2">
    <location>
        <position position="198"/>
    </location>
</feature>
<feature type="sequence conflict" description="In Ref. 3; AAL32527/AAO00925." evidence="7" ref="3">
    <original>F</original>
    <variation>Y</variation>
    <location>
        <position position="26"/>
    </location>
</feature>
<feature type="sequence conflict" description="In Ref. 3; AAL32527/AAO00925." evidence="7" ref="3">
    <original>S</original>
    <variation>P</variation>
    <location>
        <position position="188"/>
    </location>
</feature>
<proteinExistence type="evidence at protein level"/>
<evidence type="ECO:0000250" key="1">
    <source>
        <dbReference type="UniProtKB" id="P24100"/>
    </source>
</evidence>
<evidence type="ECO:0000250" key="2">
    <source>
        <dbReference type="UniProtKB" id="Q9C9M7"/>
    </source>
</evidence>
<evidence type="ECO:0000255" key="3">
    <source>
        <dbReference type="PROSITE-ProRule" id="PRU00159"/>
    </source>
</evidence>
<evidence type="ECO:0000255" key="4">
    <source>
        <dbReference type="PROSITE-ProRule" id="PRU10027"/>
    </source>
</evidence>
<evidence type="ECO:0000256" key="5">
    <source>
        <dbReference type="SAM" id="MobiDB-lite"/>
    </source>
</evidence>
<evidence type="ECO:0000269" key="6">
    <source>
    </source>
</evidence>
<evidence type="ECO:0000305" key="7"/>
<sequence>MAAAAFGQLNLEEPPPIWGSRSVDCFEKLEQIGEGTYGQVYMAKEIKTGEIVALKKIRMDNEREGFPITAIREIKILKKLHHENVIHLKEIVTSPGRDRDDQGKPDNNKYKGGIYMVFEYMDHDLTGLADRPGLRFTVPQIKCYMKQLLTGLHYCHVNQVLHRDIKGSNLLIDNEGNLKLADFGLARSYSHDHTGNLTNRVITLWYRPPELLLGATKYGPAIDMWSVGCIFAELLNGKPILPGKTENEQLNKIYELCGSPDESNWPGVSKMPWYNQMKSSRPLKRRVREIYRHFDRHALELLEKMLVLDPSQRICAKDALDAEYFWTDPLPCDPKSLPTYESSHEFQTKKKRQQMRHNEEAAKKQKLQHPQQQHSRLPPQQHGVGQSHAAPLWPAGPNHPMNNNAPPPQIPAGGHYYGGKPRGGAPVPNRYPPSGNQTGGYNNQSRGGYSSGAYPPQGRGAPYGAGPRGPSGGYGVGPPNYSQGGGQYGGSGGSGRGQNPMGGARNQQYGWQP</sequence>
<accession>Q8W4P1</accession>
<accession>Q9LV82</accession>
<name>CDKC2_ARATH</name>
<organism>
    <name type="scientific">Arabidopsis thaliana</name>
    <name type="common">Mouse-ear cress</name>
    <dbReference type="NCBI Taxonomy" id="3702"/>
    <lineage>
        <taxon>Eukaryota</taxon>
        <taxon>Viridiplantae</taxon>
        <taxon>Streptophyta</taxon>
        <taxon>Embryophyta</taxon>
        <taxon>Tracheophyta</taxon>
        <taxon>Spermatophyta</taxon>
        <taxon>Magnoliopsida</taxon>
        <taxon>eudicotyledons</taxon>
        <taxon>Gunneridae</taxon>
        <taxon>Pentapetalae</taxon>
        <taxon>rosids</taxon>
        <taxon>malvids</taxon>
        <taxon>Brassicales</taxon>
        <taxon>Brassicaceae</taxon>
        <taxon>Camelineae</taxon>
        <taxon>Arabidopsis</taxon>
    </lineage>
</organism>
<reference key="1">
    <citation type="journal article" date="2000" name="DNA Res.">
        <title>Structural analysis of Arabidopsis thaliana chromosome 5. X. Sequence features of the regions of 3,076,755 bp covered by sixty P1 and TAC clones.</title>
        <authorList>
            <person name="Sato S."/>
            <person name="Nakamura Y."/>
            <person name="Kaneko T."/>
            <person name="Katoh T."/>
            <person name="Asamizu E."/>
            <person name="Kotani H."/>
            <person name="Tabata S."/>
        </authorList>
    </citation>
    <scope>NUCLEOTIDE SEQUENCE [LARGE SCALE GENOMIC DNA]</scope>
    <source>
        <strain>cv. Columbia</strain>
    </source>
</reference>
<reference key="2">
    <citation type="journal article" date="2017" name="Plant J.">
        <title>Araport11: a complete reannotation of the Arabidopsis thaliana reference genome.</title>
        <authorList>
            <person name="Cheng C.Y."/>
            <person name="Krishnakumar V."/>
            <person name="Chan A.P."/>
            <person name="Thibaud-Nissen F."/>
            <person name="Schobel S."/>
            <person name="Town C.D."/>
        </authorList>
    </citation>
    <scope>GENOME REANNOTATION</scope>
    <source>
        <strain>cv. Columbia</strain>
    </source>
</reference>
<reference key="3">
    <citation type="journal article" date="2003" name="Science">
        <title>Empirical analysis of transcriptional activity in the Arabidopsis genome.</title>
        <authorList>
            <person name="Yamada K."/>
            <person name="Lim J."/>
            <person name="Dale J.M."/>
            <person name="Chen H."/>
            <person name="Shinn P."/>
            <person name="Palm C.J."/>
            <person name="Southwick A.M."/>
            <person name="Wu H.C."/>
            <person name="Kim C.J."/>
            <person name="Nguyen M."/>
            <person name="Pham P.K."/>
            <person name="Cheuk R.F."/>
            <person name="Karlin-Newmann G."/>
            <person name="Liu S.X."/>
            <person name="Lam B."/>
            <person name="Sakano H."/>
            <person name="Wu T."/>
            <person name="Yu G."/>
            <person name="Miranda M."/>
            <person name="Quach H.L."/>
            <person name="Tripp M."/>
            <person name="Chang C.H."/>
            <person name="Lee J.M."/>
            <person name="Toriumi M.J."/>
            <person name="Chan M.M."/>
            <person name="Tang C.C."/>
            <person name="Onodera C.S."/>
            <person name="Deng J.M."/>
            <person name="Akiyama K."/>
            <person name="Ansari Y."/>
            <person name="Arakawa T."/>
            <person name="Banh J."/>
            <person name="Banno F."/>
            <person name="Bowser L."/>
            <person name="Brooks S.Y."/>
            <person name="Carninci P."/>
            <person name="Chao Q."/>
            <person name="Choy N."/>
            <person name="Enju A."/>
            <person name="Goldsmith A.D."/>
            <person name="Gurjal M."/>
            <person name="Hansen N.F."/>
            <person name="Hayashizaki Y."/>
            <person name="Johnson-Hopson C."/>
            <person name="Hsuan V.W."/>
            <person name="Iida K."/>
            <person name="Karnes M."/>
            <person name="Khan S."/>
            <person name="Koesema E."/>
            <person name="Ishida J."/>
            <person name="Jiang P.X."/>
            <person name="Jones T."/>
            <person name="Kawai J."/>
            <person name="Kamiya A."/>
            <person name="Meyers C."/>
            <person name="Nakajima M."/>
            <person name="Narusaka M."/>
            <person name="Seki M."/>
            <person name="Sakurai T."/>
            <person name="Satou M."/>
            <person name="Tamse R."/>
            <person name="Vaysberg M."/>
            <person name="Wallender E.K."/>
            <person name="Wong C."/>
            <person name="Yamamura Y."/>
            <person name="Yuan S."/>
            <person name="Shinozaki K."/>
            <person name="Davis R.W."/>
            <person name="Theologis A."/>
            <person name="Ecker J.R."/>
        </authorList>
    </citation>
    <scope>NUCLEOTIDE SEQUENCE [LARGE SCALE MRNA]</scope>
    <source>
        <strain>cv. Columbia</strain>
    </source>
</reference>
<reference key="4">
    <citation type="journal article" date="2002" name="Plant Cell">
        <title>Genome-wide analysis of core cell cycle genes in Arabidopsis.</title>
        <authorList>
            <person name="Vandepoele K."/>
            <person name="Raes J."/>
            <person name="de Veylder L."/>
            <person name="Rouze P."/>
            <person name="Rombauts S."/>
            <person name="Inze D."/>
        </authorList>
    </citation>
    <scope>GENE FAMILY</scope>
    <scope>NOMENCLATURE</scope>
</reference>
<reference key="5">
    <citation type="journal article" date="2003" name="Cell. Mol. Life Sci.">
        <title>Novel complexes of cyclin-dependent kinases and a cyclin-like protein from Arabidopsis thaliana with a function unrelated to cell division.</title>
        <authorList>
            <person name="Barroco R.M."/>
            <person name="de Veylder L."/>
            <person name="Magyar Z."/>
            <person name="Engler G."/>
            <person name="Inze D."/>
            <person name="Mironov V."/>
        </authorList>
    </citation>
    <scope>TISSUE SPECIFICITY</scope>
    <scope>INTERACTION WITH CYCT1-3</scope>
</reference>
<reference key="6">
    <citation type="journal article" date="2006" name="Annu. Rev. Genet.">
        <title>Cell cycle regulation in plant development.</title>
        <authorList>
            <person name="Inze D."/>
            <person name="de Veylder L."/>
        </authorList>
    </citation>
    <scope>REVIEW</scope>
</reference>